<gene>
    <name type="ordered locus">BCAN_A0034</name>
</gene>
<feature type="chain" id="PRO_1000078748" description="Nucleoid-associated protein BCAN_A0034">
    <location>
        <begin position="1"/>
        <end position="107"/>
    </location>
</feature>
<organism>
    <name type="scientific">Brucella canis (strain ATCC 23365 / NCTC 10854 / RM-666)</name>
    <dbReference type="NCBI Taxonomy" id="483179"/>
    <lineage>
        <taxon>Bacteria</taxon>
        <taxon>Pseudomonadati</taxon>
        <taxon>Pseudomonadota</taxon>
        <taxon>Alphaproteobacteria</taxon>
        <taxon>Hyphomicrobiales</taxon>
        <taxon>Brucellaceae</taxon>
        <taxon>Brucella/Ochrobactrum group</taxon>
        <taxon>Brucella</taxon>
    </lineage>
</organism>
<accession>A9M6N8</accession>
<keyword id="KW-0963">Cytoplasm</keyword>
<keyword id="KW-0238">DNA-binding</keyword>
<keyword id="KW-1185">Reference proteome</keyword>
<comment type="function">
    <text evidence="1">Binds to DNA and alters its conformation. May be involved in regulation of gene expression, nucleoid organization and DNA protection.</text>
</comment>
<comment type="subunit">
    <text evidence="1">Homodimer.</text>
</comment>
<comment type="subcellular location">
    <subcellularLocation>
        <location evidence="1">Cytoplasm</location>
        <location evidence="1">Nucleoid</location>
    </subcellularLocation>
</comment>
<comment type="similarity">
    <text evidence="1">Belongs to the YbaB/EbfC family.</text>
</comment>
<proteinExistence type="inferred from homology"/>
<protein>
    <recommendedName>
        <fullName evidence="1">Nucleoid-associated protein BCAN_A0034</fullName>
    </recommendedName>
</protein>
<dbReference type="EMBL" id="CP000872">
    <property type="protein sequence ID" value="ABX61139.1"/>
    <property type="molecule type" value="Genomic_DNA"/>
</dbReference>
<dbReference type="RefSeq" id="WP_002965280.1">
    <property type="nucleotide sequence ID" value="NC_010103.1"/>
</dbReference>
<dbReference type="SMR" id="A9M6N8"/>
<dbReference type="KEGG" id="bcs:BCAN_A0034"/>
<dbReference type="HOGENOM" id="CLU_140930_0_1_5"/>
<dbReference type="PhylomeDB" id="A9M6N8"/>
<dbReference type="Proteomes" id="UP000001385">
    <property type="component" value="Chromosome I"/>
</dbReference>
<dbReference type="GO" id="GO:0043590">
    <property type="term" value="C:bacterial nucleoid"/>
    <property type="evidence" value="ECO:0007669"/>
    <property type="project" value="UniProtKB-UniRule"/>
</dbReference>
<dbReference type="GO" id="GO:0005829">
    <property type="term" value="C:cytosol"/>
    <property type="evidence" value="ECO:0007669"/>
    <property type="project" value="TreeGrafter"/>
</dbReference>
<dbReference type="GO" id="GO:0003677">
    <property type="term" value="F:DNA binding"/>
    <property type="evidence" value="ECO:0007669"/>
    <property type="project" value="UniProtKB-UniRule"/>
</dbReference>
<dbReference type="Gene3D" id="3.30.1310.10">
    <property type="entry name" value="Nucleoid-associated protein YbaB-like domain"/>
    <property type="match status" value="1"/>
</dbReference>
<dbReference type="HAMAP" id="MF_00274">
    <property type="entry name" value="DNA_YbaB_EbfC"/>
    <property type="match status" value="1"/>
</dbReference>
<dbReference type="InterPro" id="IPR036894">
    <property type="entry name" value="YbaB-like_sf"/>
</dbReference>
<dbReference type="InterPro" id="IPR004401">
    <property type="entry name" value="YbaB/EbfC"/>
</dbReference>
<dbReference type="NCBIfam" id="TIGR00103">
    <property type="entry name" value="DNA_YbaB_EbfC"/>
    <property type="match status" value="1"/>
</dbReference>
<dbReference type="PANTHER" id="PTHR33449">
    <property type="entry name" value="NUCLEOID-ASSOCIATED PROTEIN YBAB"/>
    <property type="match status" value="1"/>
</dbReference>
<dbReference type="PANTHER" id="PTHR33449:SF1">
    <property type="entry name" value="NUCLEOID-ASSOCIATED PROTEIN YBAB"/>
    <property type="match status" value="1"/>
</dbReference>
<dbReference type="Pfam" id="PF02575">
    <property type="entry name" value="YbaB_DNA_bd"/>
    <property type="match status" value="1"/>
</dbReference>
<dbReference type="PIRSF" id="PIRSF004555">
    <property type="entry name" value="UCP004555"/>
    <property type="match status" value="1"/>
</dbReference>
<dbReference type="SUPFAM" id="SSF82607">
    <property type="entry name" value="YbaB-like"/>
    <property type="match status" value="1"/>
</dbReference>
<reference key="1">
    <citation type="submission" date="2007-10" db="EMBL/GenBank/DDBJ databases">
        <title>Brucella canis ATCC 23365 whole genome shotgun sequencing project.</title>
        <authorList>
            <person name="Setubal J.C."/>
            <person name="Bowns C."/>
            <person name="Boyle S."/>
            <person name="Crasta O.R."/>
            <person name="Czar M.J."/>
            <person name="Dharmanolla C."/>
            <person name="Gillespie J.J."/>
            <person name="Kenyon R.W."/>
            <person name="Lu J."/>
            <person name="Mane S."/>
            <person name="Mohapatra S."/>
            <person name="Nagrani S."/>
            <person name="Purkayastha A."/>
            <person name="Rajasimha H.K."/>
            <person name="Shallom J.M."/>
            <person name="Shallom S."/>
            <person name="Shukla M."/>
            <person name="Snyder E.E."/>
            <person name="Sobral B.W."/>
            <person name="Wattam A.R."/>
            <person name="Will R."/>
            <person name="Williams K."/>
            <person name="Yoo H."/>
            <person name="Bruce D."/>
            <person name="Detter C."/>
            <person name="Munk C."/>
            <person name="Brettin T.S."/>
        </authorList>
    </citation>
    <scope>NUCLEOTIDE SEQUENCE [LARGE SCALE GENOMIC DNA]</scope>
    <source>
        <strain>ATCC 23365 / NCTC 10854 / RM-666</strain>
    </source>
</reference>
<sequence length="107" mass="11365">MRDMMGMMKQAKELQAKMKAMQDEIATMEASASSGGGLVTVTLSGKGTLSALKIDPSLMKEDEVEILEDLIIAAHNDAKAKLEAAMAEKTQSLTAGLPIPPGFKLPF</sequence>
<evidence type="ECO:0000255" key="1">
    <source>
        <dbReference type="HAMAP-Rule" id="MF_00274"/>
    </source>
</evidence>
<name>Y034_BRUC2</name>